<name>YOP1_EREGS</name>
<proteinExistence type="inferred from homology"/>
<accession>Q75A56</accession>
<evidence type="ECO:0000250" key="1">
    <source>
        <dbReference type="UniProtKB" id="Q12402"/>
    </source>
</evidence>
<evidence type="ECO:0000255" key="2"/>
<evidence type="ECO:0000256" key="3">
    <source>
        <dbReference type="SAM" id="MobiDB-lite"/>
    </source>
</evidence>
<evidence type="ECO:0000305" key="4"/>
<organism>
    <name type="scientific">Eremothecium gossypii (strain ATCC 10895 / CBS 109.51 / FGSC 9923 / NRRL Y-1056)</name>
    <name type="common">Yeast</name>
    <name type="synonym">Ashbya gossypii</name>
    <dbReference type="NCBI Taxonomy" id="284811"/>
    <lineage>
        <taxon>Eukaryota</taxon>
        <taxon>Fungi</taxon>
        <taxon>Dikarya</taxon>
        <taxon>Ascomycota</taxon>
        <taxon>Saccharomycotina</taxon>
        <taxon>Saccharomycetes</taxon>
        <taxon>Saccharomycetales</taxon>
        <taxon>Saccharomycetaceae</taxon>
        <taxon>Eremothecium</taxon>
    </lineage>
</organism>
<gene>
    <name type="primary">YOP1</name>
    <name type="ordered locus">ADR063W</name>
</gene>
<feature type="chain" id="PRO_0000101847" description="Protein YOP1">
    <location>
        <begin position="1"/>
        <end position="188"/>
    </location>
</feature>
<feature type="topological domain" description="Cytoplasmic" evidence="1">
    <location>
        <begin position="1"/>
        <end position="35"/>
    </location>
</feature>
<feature type="transmembrane region" description="Helical" evidence="1">
    <location>
        <begin position="36"/>
        <end position="55"/>
    </location>
</feature>
<feature type="topological domain" description="Lumenal" evidence="1">
    <location>
        <begin position="56"/>
        <end position="57"/>
    </location>
</feature>
<feature type="transmembrane region" description="Helical" evidence="1">
    <location>
        <begin position="58"/>
        <end position="78"/>
    </location>
</feature>
<feature type="topological domain" description="Cytoplasmic" evidence="1">
    <location>
        <begin position="79"/>
        <end position="88"/>
    </location>
</feature>
<feature type="transmembrane region" description="Helical" evidence="1">
    <location>
        <begin position="89"/>
        <end position="105"/>
    </location>
</feature>
<feature type="topological domain" description="Lumenal" evidence="1">
    <location>
        <begin position="106"/>
        <end position="108"/>
    </location>
</feature>
<feature type="transmembrane region" description="Helical" evidence="1">
    <location>
        <begin position="109"/>
        <end position="127"/>
    </location>
</feature>
<feature type="topological domain" description="Cytoplasmic" evidence="1">
    <location>
        <begin position="128"/>
        <end position="188"/>
    </location>
</feature>
<feature type="region of interest" description="Disordered" evidence="3">
    <location>
        <begin position="163"/>
        <end position="188"/>
    </location>
</feature>
<feature type="compositionally biased region" description="Low complexity" evidence="3">
    <location>
        <begin position="170"/>
        <end position="188"/>
    </location>
</feature>
<sequence>MAEIAGNLQRILQSLDRQFAGNKYLQEFERKTGFPKSYAIAGAGVAYLFIIFINVGGVGEILSNFLGFVLPCYYSLHAIKTTTTADDTELLTYWIVFAFFSVIEFWSKAILYWVPFYWFFKTIFLIFIALPQLGGASLIYHRVIAPLTDPYIAAGSQRKASGISSKMEQAAKGASARATGAASHQSSD</sequence>
<keyword id="KW-0256">Endoplasmic reticulum</keyword>
<keyword id="KW-0333">Golgi apparatus</keyword>
<keyword id="KW-0472">Membrane</keyword>
<keyword id="KW-1185">Reference proteome</keyword>
<keyword id="KW-0812">Transmembrane</keyword>
<keyword id="KW-1133">Transmembrane helix</keyword>
<reference key="1">
    <citation type="journal article" date="2004" name="Science">
        <title>The Ashbya gossypii genome as a tool for mapping the ancient Saccharomyces cerevisiae genome.</title>
        <authorList>
            <person name="Dietrich F.S."/>
            <person name="Voegeli S."/>
            <person name="Brachat S."/>
            <person name="Lerch A."/>
            <person name="Gates K."/>
            <person name="Steiner S."/>
            <person name="Mohr C."/>
            <person name="Poehlmann R."/>
            <person name="Luedi P."/>
            <person name="Choi S."/>
            <person name="Wing R.A."/>
            <person name="Flavier A."/>
            <person name="Gaffney T.D."/>
            <person name="Philippsen P."/>
        </authorList>
    </citation>
    <scope>NUCLEOTIDE SEQUENCE [LARGE SCALE GENOMIC DNA]</scope>
    <source>
        <strain>ATCC 10895 / CBS 109.51 / FGSC 9923 / NRRL Y-1056</strain>
    </source>
</reference>
<reference key="2">
    <citation type="journal article" date="2013" name="G3 (Bethesda)">
        <title>Genomes of Ashbya fungi isolated from insects reveal four mating-type loci, numerous translocations, lack of transposons, and distinct gene duplications.</title>
        <authorList>
            <person name="Dietrich F.S."/>
            <person name="Voegeli S."/>
            <person name="Kuo S."/>
            <person name="Philippsen P."/>
        </authorList>
    </citation>
    <scope>GENOME REANNOTATION</scope>
    <scope>SEQUENCE REVISION TO 19</scope>
    <source>
        <strain>ATCC 10895 / CBS 109.51 / FGSC 9923 / NRRL Y-1056</strain>
    </source>
</reference>
<dbReference type="EMBL" id="AE016817">
    <property type="protein sequence ID" value="AAS51983.2"/>
    <property type="molecule type" value="Genomic_DNA"/>
</dbReference>
<dbReference type="RefSeq" id="NP_984159.2">
    <property type="nucleotide sequence ID" value="NM_209512.2"/>
</dbReference>
<dbReference type="FunCoup" id="Q75A56">
    <property type="interactions" value="362"/>
</dbReference>
<dbReference type="STRING" id="284811.Q75A56"/>
<dbReference type="EnsemblFungi" id="AAS51983">
    <property type="protein sequence ID" value="AAS51983"/>
    <property type="gene ID" value="AGOS_ADR063W"/>
</dbReference>
<dbReference type="GeneID" id="4620376"/>
<dbReference type="KEGG" id="ago:AGOS_ADR063W"/>
<dbReference type="eggNOG" id="KOG1725">
    <property type="taxonomic scope" value="Eukaryota"/>
</dbReference>
<dbReference type="HOGENOM" id="CLU_028431_2_1_1"/>
<dbReference type="InParanoid" id="Q75A56"/>
<dbReference type="OMA" id="DTQYWVV"/>
<dbReference type="OrthoDB" id="10009287at2759"/>
<dbReference type="Proteomes" id="UP000000591">
    <property type="component" value="Chromosome IV"/>
</dbReference>
<dbReference type="GO" id="GO:0032153">
    <property type="term" value="C:cell division site"/>
    <property type="evidence" value="ECO:0007669"/>
    <property type="project" value="EnsemblFungi"/>
</dbReference>
<dbReference type="GO" id="GO:0032541">
    <property type="term" value="C:cortical endoplasmic reticulum"/>
    <property type="evidence" value="ECO:0007669"/>
    <property type="project" value="EnsemblFungi"/>
</dbReference>
<dbReference type="GO" id="GO:0005789">
    <property type="term" value="C:endoplasmic reticulum membrane"/>
    <property type="evidence" value="ECO:0007669"/>
    <property type="project" value="UniProtKB-SubCell"/>
</dbReference>
<dbReference type="GO" id="GO:0000139">
    <property type="term" value="C:Golgi membrane"/>
    <property type="evidence" value="ECO:0007669"/>
    <property type="project" value="UniProtKB-SubCell"/>
</dbReference>
<dbReference type="GO" id="GO:0005635">
    <property type="term" value="C:nuclear envelope"/>
    <property type="evidence" value="ECO:0007669"/>
    <property type="project" value="EnsemblFungi"/>
</dbReference>
<dbReference type="GO" id="GO:0180020">
    <property type="term" value="F:membrane bending activity"/>
    <property type="evidence" value="ECO:0007669"/>
    <property type="project" value="EnsemblFungi"/>
</dbReference>
<dbReference type="GO" id="GO:0048309">
    <property type="term" value="P:endoplasmic reticulum inheritance"/>
    <property type="evidence" value="ECO:0007669"/>
    <property type="project" value="EnsemblFungi"/>
</dbReference>
<dbReference type="GO" id="GO:1990809">
    <property type="term" value="P:endoplasmic reticulum tubular network membrane organization"/>
    <property type="evidence" value="ECO:0007669"/>
    <property type="project" value="EnsemblFungi"/>
</dbReference>
<dbReference type="GO" id="GO:0032581">
    <property type="term" value="P:ER-dependent peroxisome organization"/>
    <property type="evidence" value="ECO:0007669"/>
    <property type="project" value="EnsemblFungi"/>
</dbReference>
<dbReference type="GO" id="GO:0051292">
    <property type="term" value="P:nuclear pore complex assembly"/>
    <property type="evidence" value="ECO:0007669"/>
    <property type="project" value="EnsemblFungi"/>
</dbReference>
<dbReference type="GO" id="GO:0034976">
    <property type="term" value="P:response to endoplasmic reticulum stress"/>
    <property type="evidence" value="ECO:0007669"/>
    <property type="project" value="EnsemblFungi"/>
</dbReference>
<dbReference type="GO" id="GO:0007033">
    <property type="term" value="P:vacuole organization"/>
    <property type="evidence" value="ECO:0007669"/>
    <property type="project" value="EnsemblFungi"/>
</dbReference>
<dbReference type="GO" id="GO:0016192">
    <property type="term" value="P:vesicle-mediated transport"/>
    <property type="evidence" value="ECO:0007669"/>
    <property type="project" value="EnsemblFungi"/>
</dbReference>
<dbReference type="InterPro" id="IPR004345">
    <property type="entry name" value="TB2_DP1_HVA22"/>
</dbReference>
<dbReference type="PANTHER" id="PTHR12300">
    <property type="entry name" value="HVA22-LIKE PROTEINS"/>
    <property type="match status" value="1"/>
</dbReference>
<dbReference type="PANTHER" id="PTHR12300:SF161">
    <property type="entry name" value="RECEPTOR EXPRESSION-ENHANCING PROTEIN"/>
    <property type="match status" value="1"/>
</dbReference>
<dbReference type="Pfam" id="PF03134">
    <property type="entry name" value="TB2_DP1_HVA22"/>
    <property type="match status" value="1"/>
</dbReference>
<protein>
    <recommendedName>
        <fullName>Protein YOP1</fullName>
    </recommendedName>
</protein>
<comment type="function">
    <text evidence="1">Required to generate and maintain the structure of the tubular endoplasmic reticulum network and the vacuole. Induces high curvature in membranes and causes membrane tubule formation. Involved in membrane/vesicle trafficking.</text>
</comment>
<comment type="subunit">
    <text evidence="1">Oligomer.</text>
</comment>
<comment type="subcellular location">
    <subcellularLocation>
        <location evidence="1">Endoplasmic reticulum membrane</location>
        <topology evidence="1">Multi-pass membrane protein</topology>
    </subcellularLocation>
    <subcellularLocation>
        <location evidence="1">Golgi apparatus membrane</location>
        <topology evidence="2">Multi-pass membrane protein</topology>
    </subcellularLocation>
</comment>
<comment type="domain">
    <text evidence="1">The short lumenal loops between transmembrane domains 1 and 2 and between transmembrane domains 3 and 4 may impart a wedge-like configuration, thus deforming membranes.</text>
</comment>
<comment type="similarity">
    <text evidence="4">Belongs to the DP1 family.</text>
</comment>